<protein>
    <recommendedName>
        <fullName>Retinol dehydrogenase 10</fullName>
        <ecNumber>1.1.1.300</ecNumber>
    </recommendedName>
</protein>
<organism>
    <name type="scientific">Xenopus tropicalis</name>
    <name type="common">Western clawed frog</name>
    <name type="synonym">Silurana tropicalis</name>
    <dbReference type="NCBI Taxonomy" id="8364"/>
    <lineage>
        <taxon>Eukaryota</taxon>
        <taxon>Metazoa</taxon>
        <taxon>Chordata</taxon>
        <taxon>Craniata</taxon>
        <taxon>Vertebrata</taxon>
        <taxon>Euteleostomi</taxon>
        <taxon>Amphibia</taxon>
        <taxon>Batrachia</taxon>
        <taxon>Anura</taxon>
        <taxon>Pipoidea</taxon>
        <taxon>Pipidae</taxon>
        <taxon>Xenopodinae</taxon>
        <taxon>Xenopus</taxon>
        <taxon>Silurana</taxon>
    </lineage>
</organism>
<name>RDH10_XENTR</name>
<gene>
    <name type="primary">rdh10</name>
</gene>
<dbReference type="EC" id="1.1.1.300"/>
<dbReference type="EMBL" id="BC084483">
    <property type="protein sequence ID" value="AAH84483.1"/>
    <property type="molecule type" value="mRNA"/>
</dbReference>
<dbReference type="RefSeq" id="NP_001011091.1">
    <property type="nucleotide sequence ID" value="NM_001011091.1"/>
</dbReference>
<dbReference type="SMR" id="Q5XGF7"/>
<dbReference type="FunCoup" id="Q5XGF7">
    <property type="interactions" value="533"/>
</dbReference>
<dbReference type="STRING" id="8364.ENSXETP00000054018"/>
<dbReference type="PaxDb" id="8364-ENSXETP00000025854"/>
<dbReference type="DNASU" id="496504"/>
<dbReference type="GeneID" id="496504"/>
<dbReference type="KEGG" id="xtr:496504"/>
<dbReference type="AGR" id="Xenbase:XB-GENE-944961"/>
<dbReference type="CTD" id="157506"/>
<dbReference type="Xenbase" id="XB-GENE-944961">
    <property type="gene designation" value="rdh10"/>
</dbReference>
<dbReference type="eggNOG" id="KOG1201">
    <property type="taxonomic scope" value="Eukaryota"/>
</dbReference>
<dbReference type="HOGENOM" id="CLU_010194_2_5_1"/>
<dbReference type="InParanoid" id="Q5XGF7"/>
<dbReference type="OMA" id="KQAMNNN"/>
<dbReference type="OrthoDB" id="5840532at2759"/>
<dbReference type="PhylomeDB" id="Q5XGF7"/>
<dbReference type="TreeFam" id="TF312837"/>
<dbReference type="Reactome" id="R-XTR-2453902">
    <property type="pathway name" value="The canonical retinoid cycle in rods (twilight vision)"/>
</dbReference>
<dbReference type="Reactome" id="R-XTR-5365859">
    <property type="pathway name" value="RA biosynthesis pathway"/>
</dbReference>
<dbReference type="UniPathway" id="UPA00912"/>
<dbReference type="Proteomes" id="UP000008143">
    <property type="component" value="Chromosome 6"/>
</dbReference>
<dbReference type="Bgee" id="ENSXETG00000011825">
    <property type="expression patterns" value="Expressed in gastrula and 12 other cell types or tissues"/>
</dbReference>
<dbReference type="GO" id="GO:0005789">
    <property type="term" value="C:endoplasmic reticulum membrane"/>
    <property type="evidence" value="ECO:0007669"/>
    <property type="project" value="UniProtKB-SubCell"/>
</dbReference>
<dbReference type="GO" id="GO:0052650">
    <property type="term" value="F:all-trans-retinol dehydrogenase (NADP+) activity"/>
    <property type="evidence" value="ECO:0007669"/>
    <property type="project" value="UniProtKB-EC"/>
</dbReference>
<dbReference type="CDD" id="cd05339">
    <property type="entry name" value="17beta-HSDXI-like_SDR_c"/>
    <property type="match status" value="1"/>
</dbReference>
<dbReference type="FunFam" id="3.40.50.720:FF:000177">
    <property type="entry name" value="Retinol dehydrogenase 10"/>
    <property type="match status" value="1"/>
</dbReference>
<dbReference type="Gene3D" id="3.40.50.720">
    <property type="entry name" value="NAD(P)-binding Rossmann-like Domain"/>
    <property type="match status" value="1"/>
</dbReference>
<dbReference type="InterPro" id="IPR036291">
    <property type="entry name" value="NAD(P)-bd_dom_sf"/>
</dbReference>
<dbReference type="InterPro" id="IPR020904">
    <property type="entry name" value="Sc_DH/Rdtase_CS"/>
</dbReference>
<dbReference type="InterPro" id="IPR002347">
    <property type="entry name" value="SDR_fam"/>
</dbReference>
<dbReference type="PANTHER" id="PTHR24322">
    <property type="entry name" value="PKSB"/>
    <property type="match status" value="1"/>
</dbReference>
<dbReference type="PANTHER" id="PTHR24322:SF750">
    <property type="entry name" value="RETINOL DEHYDROGENASE 10"/>
    <property type="match status" value="1"/>
</dbReference>
<dbReference type="Pfam" id="PF00106">
    <property type="entry name" value="adh_short"/>
    <property type="match status" value="1"/>
</dbReference>
<dbReference type="PRINTS" id="PR00081">
    <property type="entry name" value="GDHRDH"/>
</dbReference>
<dbReference type="PRINTS" id="PR00080">
    <property type="entry name" value="SDRFAMILY"/>
</dbReference>
<dbReference type="SUPFAM" id="SSF51735">
    <property type="entry name" value="NAD(P)-binding Rossmann-fold domains"/>
    <property type="match status" value="1"/>
</dbReference>
<dbReference type="PROSITE" id="PS00061">
    <property type="entry name" value="ADH_SHORT"/>
    <property type="match status" value="1"/>
</dbReference>
<sequence length="341" mass="38424">MHIVLEFFLVTFKVLWAFVLAAAKWLVRPKDKSVAGQVCLITGAGSGLGRLFALEFARRRAQLVLWDINSQSNEETAEMVRSIYRELEAEDSARRAGNATEEEVQPCCNFQVYTYTCDVGKRESVYSTAERVRREVGDVYLLLNNAGVVSGHHLLECPDELIERTMMVNCHAHFWTTKAFLPKMMEMNHGHIVSVASSLGLFSTAGVEDYCASKFGVVGFHESLSHELKAADKDGIKTTLVCPYLVDTGMFRGCRIRKEIEPFLPPLKPDYCVKQAMRAILTDQPMICTPRLMYIVTCMKSILPFEAVVCMYRFLGADKCMYPFIAQRKQATNNNEAKNGI</sequence>
<proteinExistence type="evidence at transcript level"/>
<accession>Q5XGF7</accession>
<reference key="1">
    <citation type="submission" date="2004-10" db="EMBL/GenBank/DDBJ databases">
        <authorList>
            <consortium name="NIH - Xenopus Gene Collection (XGC) project"/>
        </authorList>
    </citation>
    <scope>NUCLEOTIDE SEQUENCE [LARGE SCALE MRNA]</scope>
    <source>
        <tissue>Embryo</tissue>
    </source>
</reference>
<comment type="function">
    <text evidence="1">Retinol dehydrogenase with a clear preference for NADP. Converts all-trans-retinol to all-trans-retinal. Has no detectable activity towards 11-cis-retinol, 9-cis-retinol and 13-cis-retinol (By similarity).</text>
</comment>
<comment type="catalytic activity">
    <reaction>
        <text>all-trans-retinol + NADP(+) = all-trans-retinal + NADPH + H(+)</text>
        <dbReference type="Rhea" id="RHEA:25033"/>
        <dbReference type="ChEBI" id="CHEBI:15378"/>
        <dbReference type="ChEBI" id="CHEBI:17336"/>
        <dbReference type="ChEBI" id="CHEBI:17898"/>
        <dbReference type="ChEBI" id="CHEBI:57783"/>
        <dbReference type="ChEBI" id="CHEBI:58349"/>
        <dbReference type="EC" id="1.1.1.300"/>
    </reaction>
</comment>
<comment type="pathway">
    <text>Cofactor metabolism; retinol metabolism.</text>
</comment>
<comment type="subcellular location">
    <subcellularLocation>
        <location evidence="4">Microsome membrane</location>
        <topology evidence="4">Single-pass membrane protein</topology>
    </subcellularLocation>
    <subcellularLocation>
        <location evidence="4">Endoplasmic reticulum membrane</location>
        <topology evidence="4">Single-pass membrane protein</topology>
    </subcellularLocation>
</comment>
<comment type="similarity">
    <text evidence="4">Belongs to the short-chain dehydrogenases/reductases (SDR) family.</text>
</comment>
<evidence type="ECO:0000250" key="1"/>
<evidence type="ECO:0000255" key="2"/>
<evidence type="ECO:0000255" key="3">
    <source>
        <dbReference type="PROSITE-ProRule" id="PRU10001"/>
    </source>
</evidence>
<evidence type="ECO:0000305" key="4"/>
<feature type="chain" id="PRO_0000307689" description="Retinol dehydrogenase 10">
    <location>
        <begin position="1"/>
        <end position="341"/>
    </location>
</feature>
<feature type="transmembrane region" description="Helical; Signal-anchor" evidence="2">
    <location>
        <begin position="3"/>
        <end position="23"/>
    </location>
</feature>
<feature type="active site" description="Proton acceptor" evidence="3">
    <location>
        <position position="210"/>
    </location>
</feature>
<feature type="binding site" evidence="1">
    <location>
        <begin position="40"/>
        <end position="64"/>
    </location>
    <ligand>
        <name>NADP(+)</name>
        <dbReference type="ChEBI" id="CHEBI:58349"/>
    </ligand>
</feature>
<feature type="binding site" evidence="1">
    <location>
        <position position="197"/>
    </location>
    <ligand>
        <name>substrate</name>
    </ligand>
</feature>
<keyword id="KW-0256">Endoplasmic reticulum</keyword>
<keyword id="KW-0443">Lipid metabolism</keyword>
<keyword id="KW-0472">Membrane</keyword>
<keyword id="KW-0492">Microsome</keyword>
<keyword id="KW-0521">NADP</keyword>
<keyword id="KW-0560">Oxidoreductase</keyword>
<keyword id="KW-1185">Reference proteome</keyword>
<keyword id="KW-0735">Signal-anchor</keyword>
<keyword id="KW-0812">Transmembrane</keyword>
<keyword id="KW-1133">Transmembrane helix</keyword>